<proteinExistence type="evidence at protein level"/>
<reference key="1">
    <citation type="journal article" date="1997" name="Nat. Genet.">
        <title>Pseudoautosomal deletions encompassing a novel homeobox gene cause growth failure in idiopathic short stature and Turner syndrome.</title>
        <authorList>
            <person name="Rao E."/>
            <person name="Weiss B."/>
            <person name="Fukami M."/>
            <person name="Rump A."/>
            <person name="Niesler B."/>
            <person name="Mertz A."/>
            <person name="Muroya K."/>
            <person name="Binder G."/>
            <person name="Kirsch S."/>
            <person name="Winkelmann M."/>
            <person name="Nordsiek G."/>
            <person name="Heinrich U."/>
            <person name="Breuning M.H."/>
            <person name="Ranke M.B."/>
            <person name="Rosenthal A."/>
            <person name="Ogata T."/>
            <person name="Rappold G.A."/>
        </authorList>
    </citation>
    <scope>NUCLEOTIDE SEQUENCE [GENOMIC DNA / MRNA] (ISOFORMS SHOXA AND SHOXB)</scope>
    <scope>INVOLVEMENT IN ISS</scope>
    <source>
        <tissue>Skeletal muscle</tissue>
    </source>
</reference>
<reference key="2">
    <citation type="journal article" date="1997" name="Hum. Mol. Genet.">
        <title>PHOG, a candidate gene for involvement in the short stature of Turner syndrome.</title>
        <authorList>
            <person name="Ellison J.W."/>
            <person name="Wardak Z."/>
            <person name="Young M.F."/>
            <person name="Gehron Robey P."/>
            <person name="Laig-Webster M."/>
            <person name="Chiong W."/>
        </authorList>
    </citation>
    <scope>NUCLEOTIDE SEQUENCE [MRNA] (ISOFORM SHOXA)</scope>
</reference>
<reference key="3">
    <citation type="journal article" date="2005" name="Nature">
        <title>The DNA sequence of the human X chromosome.</title>
        <authorList>
            <person name="Ross M.T."/>
            <person name="Grafham D.V."/>
            <person name="Coffey A.J."/>
            <person name="Scherer S."/>
            <person name="McLay K."/>
            <person name="Muzny D."/>
            <person name="Platzer M."/>
            <person name="Howell G.R."/>
            <person name="Burrows C."/>
            <person name="Bird C.P."/>
            <person name="Frankish A."/>
            <person name="Lovell F.L."/>
            <person name="Howe K.L."/>
            <person name="Ashurst J.L."/>
            <person name="Fulton R.S."/>
            <person name="Sudbrak R."/>
            <person name="Wen G."/>
            <person name="Jones M.C."/>
            <person name="Hurles M.E."/>
            <person name="Andrews T.D."/>
            <person name="Scott C.E."/>
            <person name="Searle S."/>
            <person name="Ramser J."/>
            <person name="Whittaker A."/>
            <person name="Deadman R."/>
            <person name="Carter N.P."/>
            <person name="Hunt S.E."/>
            <person name="Chen R."/>
            <person name="Cree A."/>
            <person name="Gunaratne P."/>
            <person name="Havlak P."/>
            <person name="Hodgson A."/>
            <person name="Metzker M.L."/>
            <person name="Richards S."/>
            <person name="Scott G."/>
            <person name="Steffen D."/>
            <person name="Sodergren E."/>
            <person name="Wheeler D.A."/>
            <person name="Worley K.C."/>
            <person name="Ainscough R."/>
            <person name="Ambrose K.D."/>
            <person name="Ansari-Lari M.A."/>
            <person name="Aradhya S."/>
            <person name="Ashwell R.I."/>
            <person name="Babbage A.K."/>
            <person name="Bagguley C.L."/>
            <person name="Ballabio A."/>
            <person name="Banerjee R."/>
            <person name="Barker G.E."/>
            <person name="Barlow K.F."/>
            <person name="Barrett I.P."/>
            <person name="Bates K.N."/>
            <person name="Beare D.M."/>
            <person name="Beasley H."/>
            <person name="Beasley O."/>
            <person name="Beck A."/>
            <person name="Bethel G."/>
            <person name="Blechschmidt K."/>
            <person name="Brady N."/>
            <person name="Bray-Allen S."/>
            <person name="Bridgeman A.M."/>
            <person name="Brown A.J."/>
            <person name="Brown M.J."/>
            <person name="Bonnin D."/>
            <person name="Bruford E.A."/>
            <person name="Buhay C."/>
            <person name="Burch P."/>
            <person name="Burford D."/>
            <person name="Burgess J."/>
            <person name="Burrill W."/>
            <person name="Burton J."/>
            <person name="Bye J.M."/>
            <person name="Carder C."/>
            <person name="Carrel L."/>
            <person name="Chako J."/>
            <person name="Chapman J.C."/>
            <person name="Chavez D."/>
            <person name="Chen E."/>
            <person name="Chen G."/>
            <person name="Chen Y."/>
            <person name="Chen Z."/>
            <person name="Chinault C."/>
            <person name="Ciccodicola A."/>
            <person name="Clark S.Y."/>
            <person name="Clarke G."/>
            <person name="Clee C.M."/>
            <person name="Clegg S."/>
            <person name="Clerc-Blankenburg K."/>
            <person name="Clifford K."/>
            <person name="Cobley V."/>
            <person name="Cole C.G."/>
            <person name="Conquer J.S."/>
            <person name="Corby N."/>
            <person name="Connor R.E."/>
            <person name="David R."/>
            <person name="Davies J."/>
            <person name="Davis C."/>
            <person name="Davis J."/>
            <person name="Delgado O."/>
            <person name="Deshazo D."/>
            <person name="Dhami P."/>
            <person name="Ding Y."/>
            <person name="Dinh H."/>
            <person name="Dodsworth S."/>
            <person name="Draper H."/>
            <person name="Dugan-Rocha S."/>
            <person name="Dunham A."/>
            <person name="Dunn M."/>
            <person name="Durbin K.J."/>
            <person name="Dutta I."/>
            <person name="Eades T."/>
            <person name="Ellwood M."/>
            <person name="Emery-Cohen A."/>
            <person name="Errington H."/>
            <person name="Evans K.L."/>
            <person name="Faulkner L."/>
            <person name="Francis F."/>
            <person name="Frankland J."/>
            <person name="Fraser A.E."/>
            <person name="Galgoczy P."/>
            <person name="Gilbert J."/>
            <person name="Gill R."/>
            <person name="Gloeckner G."/>
            <person name="Gregory S.G."/>
            <person name="Gribble S."/>
            <person name="Griffiths C."/>
            <person name="Grocock R."/>
            <person name="Gu Y."/>
            <person name="Gwilliam R."/>
            <person name="Hamilton C."/>
            <person name="Hart E.A."/>
            <person name="Hawes A."/>
            <person name="Heath P.D."/>
            <person name="Heitmann K."/>
            <person name="Hennig S."/>
            <person name="Hernandez J."/>
            <person name="Hinzmann B."/>
            <person name="Ho S."/>
            <person name="Hoffs M."/>
            <person name="Howden P.J."/>
            <person name="Huckle E.J."/>
            <person name="Hume J."/>
            <person name="Hunt P.J."/>
            <person name="Hunt A.R."/>
            <person name="Isherwood J."/>
            <person name="Jacob L."/>
            <person name="Johnson D."/>
            <person name="Jones S."/>
            <person name="de Jong P.J."/>
            <person name="Joseph S.S."/>
            <person name="Keenan S."/>
            <person name="Kelly S."/>
            <person name="Kershaw J.K."/>
            <person name="Khan Z."/>
            <person name="Kioschis P."/>
            <person name="Klages S."/>
            <person name="Knights A.J."/>
            <person name="Kosiura A."/>
            <person name="Kovar-Smith C."/>
            <person name="Laird G.K."/>
            <person name="Langford C."/>
            <person name="Lawlor S."/>
            <person name="Leversha M."/>
            <person name="Lewis L."/>
            <person name="Liu W."/>
            <person name="Lloyd C."/>
            <person name="Lloyd D.M."/>
            <person name="Loulseged H."/>
            <person name="Loveland J.E."/>
            <person name="Lovell J.D."/>
            <person name="Lozado R."/>
            <person name="Lu J."/>
            <person name="Lyne R."/>
            <person name="Ma J."/>
            <person name="Maheshwari M."/>
            <person name="Matthews L.H."/>
            <person name="McDowall J."/>
            <person name="McLaren S."/>
            <person name="McMurray A."/>
            <person name="Meidl P."/>
            <person name="Meitinger T."/>
            <person name="Milne S."/>
            <person name="Miner G."/>
            <person name="Mistry S.L."/>
            <person name="Morgan M."/>
            <person name="Morris S."/>
            <person name="Mueller I."/>
            <person name="Mullikin J.C."/>
            <person name="Nguyen N."/>
            <person name="Nordsiek G."/>
            <person name="Nyakatura G."/>
            <person name="O'dell C.N."/>
            <person name="Okwuonu G."/>
            <person name="Palmer S."/>
            <person name="Pandian R."/>
            <person name="Parker D."/>
            <person name="Parrish J."/>
            <person name="Pasternak S."/>
            <person name="Patel D."/>
            <person name="Pearce A.V."/>
            <person name="Pearson D.M."/>
            <person name="Pelan S.E."/>
            <person name="Perez L."/>
            <person name="Porter K.M."/>
            <person name="Ramsey Y."/>
            <person name="Reichwald K."/>
            <person name="Rhodes S."/>
            <person name="Ridler K.A."/>
            <person name="Schlessinger D."/>
            <person name="Schueler M.G."/>
            <person name="Sehra H.K."/>
            <person name="Shaw-Smith C."/>
            <person name="Shen H."/>
            <person name="Sheridan E.M."/>
            <person name="Shownkeen R."/>
            <person name="Skuce C.D."/>
            <person name="Smith M.L."/>
            <person name="Sotheran E.C."/>
            <person name="Steingruber H.E."/>
            <person name="Steward C.A."/>
            <person name="Storey R."/>
            <person name="Swann R.M."/>
            <person name="Swarbreck D."/>
            <person name="Tabor P.E."/>
            <person name="Taudien S."/>
            <person name="Taylor T."/>
            <person name="Teague B."/>
            <person name="Thomas K."/>
            <person name="Thorpe A."/>
            <person name="Timms K."/>
            <person name="Tracey A."/>
            <person name="Trevanion S."/>
            <person name="Tromans A.C."/>
            <person name="d'Urso M."/>
            <person name="Verduzco D."/>
            <person name="Villasana D."/>
            <person name="Waldron L."/>
            <person name="Wall M."/>
            <person name="Wang Q."/>
            <person name="Warren J."/>
            <person name="Warry G.L."/>
            <person name="Wei X."/>
            <person name="West A."/>
            <person name="Whitehead S.L."/>
            <person name="Whiteley M.N."/>
            <person name="Wilkinson J.E."/>
            <person name="Willey D.L."/>
            <person name="Williams G."/>
            <person name="Williams L."/>
            <person name="Williamson A."/>
            <person name="Williamson H."/>
            <person name="Wilming L."/>
            <person name="Woodmansey R.L."/>
            <person name="Wray P.W."/>
            <person name="Yen J."/>
            <person name="Zhang J."/>
            <person name="Zhou J."/>
            <person name="Zoghbi H."/>
            <person name="Zorilla S."/>
            <person name="Buck D."/>
            <person name="Reinhardt R."/>
            <person name="Poustka A."/>
            <person name="Rosenthal A."/>
            <person name="Lehrach H."/>
            <person name="Meindl A."/>
            <person name="Minx P.J."/>
            <person name="Hillier L.W."/>
            <person name="Willard H.F."/>
            <person name="Wilson R.K."/>
            <person name="Waterston R.H."/>
            <person name="Rice C.M."/>
            <person name="Vaudin M."/>
            <person name="Coulson A."/>
            <person name="Nelson D.L."/>
            <person name="Weinstock G."/>
            <person name="Sulston J.E."/>
            <person name="Durbin R.M."/>
            <person name="Hubbard T."/>
            <person name="Gibbs R.A."/>
            <person name="Beck S."/>
            <person name="Rogers J."/>
            <person name="Bentley D.R."/>
        </authorList>
    </citation>
    <scope>NUCLEOTIDE SEQUENCE [LARGE SCALE GENOMIC DNA]</scope>
</reference>
<reference key="4">
    <citation type="journal article" date="2000" name="Hum. Genet.">
        <title>Mutations in short stature homeobox containing gene (SHOX) in dyschondrosteosis but not in hypochondroplasia.</title>
        <authorList>
            <person name="Grigelioniene G."/>
            <person name="Ekloef O."/>
            <person name="Ivarsson S.A."/>
            <person name="Westphal O."/>
            <person name="Neumeyer L."/>
            <person name="Kedra D."/>
            <person name="Dumanski J."/>
            <person name="Hagenaes L."/>
        </authorList>
    </citation>
    <scope>VARIANTS LWD VAL-132 AND LEU-153</scope>
</reference>
<reference key="5">
    <citation type="journal article" date="2001" name="Am. J. Med. Genet.">
        <title>Allelic and nonallelic heterogeneity in dyschondrosteosis (Leri-Weill syndrome).</title>
        <authorList>
            <person name="Cormier-Daire V."/>
            <person name="Huber C."/>
            <person name="Munnich A."/>
        </authorList>
    </citation>
    <scope>DISEASE</scope>
</reference>
<reference key="6">
    <citation type="journal article" date="2001" name="J. Med. Genet.">
        <title>SHOX point mutations in dyschondrosteosis.</title>
        <authorList>
            <person name="Huber C."/>
            <person name="Cusin V."/>
            <person name="Le Merrer M."/>
            <person name="Mathieu M."/>
            <person name="Sulmont V."/>
            <person name="Dagoneau N."/>
            <person name="Munnich A."/>
            <person name="Cormier-Daire V."/>
        </authorList>
    </citation>
    <scope>VARIANT LWD CYS-173</scope>
</reference>
<reference key="7">
    <citation type="journal article" date="2002" name="J. Clin. Endocrinol. Metab.">
        <title>SHOX nullizygosity and haploinsufficiency in a Japanese family: implication for the development of Turner skeletal features.</title>
        <authorList>
            <person name="Ogata T."/>
            <person name="Muroya K."/>
            <person name="Sasaki G."/>
            <person name="Nishimura G."/>
            <person name="Kitoh H."/>
            <person name="Hattori T."/>
        </authorList>
    </citation>
    <scope>VARIANT LMD TRP-168</scope>
</reference>
<keyword id="KW-0010">Activator</keyword>
<keyword id="KW-0025">Alternative splicing</keyword>
<keyword id="KW-0217">Developmental protein</keyword>
<keyword id="KW-0225">Disease variant</keyword>
<keyword id="KW-0238">DNA-binding</keyword>
<keyword id="KW-0242">Dwarfism</keyword>
<keyword id="KW-0371">Homeobox</keyword>
<keyword id="KW-0539">Nucleus</keyword>
<keyword id="KW-1267">Proteomics identification</keyword>
<keyword id="KW-1185">Reference proteome</keyword>
<keyword id="KW-0804">Transcription</keyword>
<keyword id="KW-0805">Transcription regulation</keyword>
<name>SHOX_HUMAN</name>
<dbReference type="EMBL" id="Y11536">
    <property type="protein sequence ID" value="CAA72299.1"/>
    <property type="molecule type" value="mRNA"/>
</dbReference>
<dbReference type="EMBL" id="Y11535">
    <property type="protein sequence ID" value="CAA72298.1"/>
    <property type="molecule type" value="mRNA"/>
</dbReference>
<dbReference type="EMBL" id="U82668">
    <property type="status" value="NOT_ANNOTATED_CDS"/>
    <property type="molecule type" value="Genomic_DNA"/>
</dbReference>
<dbReference type="EMBL" id="U89331">
    <property type="protein sequence ID" value="AAC18820.1"/>
    <property type="molecule type" value="mRNA"/>
</dbReference>
<dbReference type="EMBL" id="BX004827">
    <property type="status" value="NOT_ANNOTATED_CDS"/>
    <property type="molecule type" value="Genomic_DNA"/>
</dbReference>
<dbReference type="CCDS" id="CCDS14106.1">
    <molecule id="O15266-2"/>
</dbReference>
<dbReference type="CCDS" id="CCDS14107.1">
    <molecule id="O15266-1"/>
</dbReference>
<dbReference type="RefSeq" id="NP_000442.1">
    <molecule id="O15266-1"/>
    <property type="nucleotide sequence ID" value="NM_000451.4"/>
</dbReference>
<dbReference type="RefSeq" id="NP_006874.1">
    <molecule id="O15266-2"/>
    <property type="nucleotide sequence ID" value="NM_006883.2"/>
</dbReference>
<dbReference type="SMR" id="O15266"/>
<dbReference type="BioGRID" id="112369">
    <property type="interactions" value="13"/>
</dbReference>
<dbReference type="FunCoup" id="O15266">
    <property type="interactions" value="713"/>
</dbReference>
<dbReference type="IntAct" id="O15266">
    <property type="interactions" value="13"/>
</dbReference>
<dbReference type="STRING" id="9606.ENSP00000370990"/>
<dbReference type="iPTMnet" id="O15266"/>
<dbReference type="PhosphoSitePlus" id="O15266"/>
<dbReference type="BioMuta" id="SHOX"/>
<dbReference type="jPOST" id="O15266"/>
<dbReference type="MassIVE" id="O15266"/>
<dbReference type="PaxDb" id="9606-ENSP00000370990"/>
<dbReference type="PeptideAtlas" id="O15266"/>
<dbReference type="ProteomicsDB" id="48555">
    <molecule id="O15266-1"/>
</dbReference>
<dbReference type="ProteomicsDB" id="48556">
    <molecule id="O15266-2"/>
</dbReference>
<dbReference type="Antibodypedia" id="23329">
    <property type="antibodies" value="124 antibodies from 25 providers"/>
</dbReference>
<dbReference type="DNASU" id="6473"/>
<dbReference type="Ensembl" id="ENST00000334060.8">
    <molecule id="O15266-2"/>
    <property type="protein sequence ID" value="ENSP00000335505.3"/>
    <property type="gene ID" value="ENSG00000185960.15"/>
</dbReference>
<dbReference type="Ensembl" id="ENST00000381575.6">
    <molecule id="O15266-2"/>
    <property type="protein sequence ID" value="ENSP00000370987.1"/>
    <property type="gene ID" value="ENSG00000185960.15"/>
</dbReference>
<dbReference type="Ensembl" id="ENST00000381578.6">
    <molecule id="O15266-1"/>
    <property type="protein sequence ID" value="ENSP00000370990.1"/>
    <property type="gene ID" value="ENSG00000185960.15"/>
</dbReference>
<dbReference type="Ensembl" id="ENST00000686671.1">
    <molecule id="O15266-1"/>
    <property type="protein sequence ID" value="ENSP00000508521.1"/>
    <property type="gene ID" value="ENSG00000185960.15"/>
</dbReference>
<dbReference type="Ensembl" id="ENST00000711141.1">
    <molecule id="O15266-2"/>
    <property type="protein sequence ID" value="ENSP00000518639.1"/>
    <property type="gene ID" value="ENSG00000292354.1"/>
</dbReference>
<dbReference type="Ensembl" id="ENST00000711142.1">
    <molecule id="O15266-1"/>
    <property type="protein sequence ID" value="ENSP00000518640.1"/>
    <property type="gene ID" value="ENSG00000292354.1"/>
</dbReference>
<dbReference type="Ensembl" id="ENST00000711143.1">
    <molecule id="O15266-2"/>
    <property type="protein sequence ID" value="ENSP00000518641.1"/>
    <property type="gene ID" value="ENSG00000292354.1"/>
</dbReference>
<dbReference type="Ensembl" id="ENST00000711145.1">
    <molecule id="O15266-1"/>
    <property type="protein sequence ID" value="ENSP00000518642.1"/>
    <property type="gene ID" value="ENSG00000292354.1"/>
</dbReference>
<dbReference type="GeneID" id="6473"/>
<dbReference type="KEGG" id="hsa:6473"/>
<dbReference type="MANE-Select" id="ENST00000686671.1">
    <property type="protein sequence ID" value="ENSP00000508521.1"/>
    <property type="RefSeq nucleotide sequence ID" value="NM_000451.4"/>
    <property type="RefSeq protein sequence ID" value="NP_000442.1"/>
</dbReference>
<dbReference type="UCSC" id="uc004cph.1">
    <molecule id="O15266-1"/>
    <property type="organism name" value="human"/>
</dbReference>
<dbReference type="AGR" id="HGNC:10853"/>
<dbReference type="CTD" id="6473"/>
<dbReference type="DisGeNET" id="6473"/>
<dbReference type="GeneCards" id="SHOX"/>
<dbReference type="GeneReviews" id="SHOX"/>
<dbReference type="HGNC" id="HGNC:10853">
    <property type="gene designation" value="SHOX"/>
</dbReference>
<dbReference type="HPA" id="ENSG00000185960">
    <property type="expression patterns" value="Low tissue specificity"/>
</dbReference>
<dbReference type="MalaCards" id="SHOX"/>
<dbReference type="MIM" id="127300">
    <property type="type" value="phenotype"/>
</dbReference>
<dbReference type="MIM" id="249700">
    <property type="type" value="phenotype"/>
</dbReference>
<dbReference type="MIM" id="300582">
    <property type="type" value="phenotype"/>
</dbReference>
<dbReference type="MIM" id="312865">
    <property type="type" value="gene"/>
</dbReference>
<dbReference type="MIM" id="400020">
    <property type="type" value="gene"/>
</dbReference>
<dbReference type="neXtProt" id="NX_O15266"/>
<dbReference type="OpenTargets" id="ENSG00000185960"/>
<dbReference type="Orphanet" id="2632">
    <property type="disease" value="Langer mesomelic dysplasia"/>
</dbReference>
<dbReference type="Orphanet" id="240">
    <property type="disease" value="Leri-Weill dyschondrosteosis"/>
</dbReference>
<dbReference type="Orphanet" id="314795">
    <property type="disease" value="SHOX-related short stature"/>
</dbReference>
<dbReference type="PharmGKB" id="PA134978644"/>
<dbReference type="VEuPathDB" id="HostDB:ENSG00000185960"/>
<dbReference type="eggNOG" id="KOG0490">
    <property type="taxonomic scope" value="Eukaryota"/>
</dbReference>
<dbReference type="GeneTree" id="ENSGT00940000154287"/>
<dbReference type="HOGENOM" id="CLU_047013_5_0_1"/>
<dbReference type="InParanoid" id="O15266"/>
<dbReference type="OMA" id="YDCKEKR"/>
<dbReference type="OrthoDB" id="6159439at2759"/>
<dbReference type="PAN-GO" id="O15266">
    <property type="GO annotations" value="4 GO annotations based on evolutionary models"/>
</dbReference>
<dbReference type="PhylomeDB" id="O15266"/>
<dbReference type="TreeFam" id="TF350757"/>
<dbReference type="PathwayCommons" id="O15266"/>
<dbReference type="SignaLink" id="O15266"/>
<dbReference type="SIGNOR" id="O15266"/>
<dbReference type="BioGRID-ORCS" id="6473">
    <property type="hits" value="8 hits in 632 CRISPR screens"/>
</dbReference>
<dbReference type="ChiTaRS" id="SHOX">
    <property type="organism name" value="human"/>
</dbReference>
<dbReference type="GeneWiki" id="Short_stature_homeobox_gene"/>
<dbReference type="GenomeRNAi" id="6473"/>
<dbReference type="Pharos" id="O15266">
    <property type="development level" value="Tbio"/>
</dbReference>
<dbReference type="PRO" id="PR:O15266"/>
<dbReference type="Proteomes" id="UP000005640">
    <property type="component" value="Chromosome X"/>
</dbReference>
<dbReference type="Proteomes" id="UP000005640">
    <property type="component" value="Chromosome Y"/>
</dbReference>
<dbReference type="RNAct" id="O15266">
    <property type="molecule type" value="protein"/>
</dbReference>
<dbReference type="Bgee" id="ENSG00000185960">
    <property type="expression patterns" value="Expressed in calcaneal tendon and 22 other cell types or tissues"/>
</dbReference>
<dbReference type="ExpressionAtlas" id="O15266">
    <property type="expression patterns" value="baseline and differential"/>
</dbReference>
<dbReference type="GO" id="GO:0000785">
    <property type="term" value="C:chromatin"/>
    <property type="evidence" value="ECO:0000247"/>
    <property type="project" value="NTNU_SB"/>
</dbReference>
<dbReference type="GO" id="GO:0043231">
    <property type="term" value="C:intracellular membrane-bounded organelle"/>
    <property type="evidence" value="ECO:0000314"/>
    <property type="project" value="HPA"/>
</dbReference>
<dbReference type="GO" id="GO:0005654">
    <property type="term" value="C:nucleoplasm"/>
    <property type="evidence" value="ECO:0000314"/>
    <property type="project" value="HPA"/>
</dbReference>
<dbReference type="GO" id="GO:0005634">
    <property type="term" value="C:nucleus"/>
    <property type="evidence" value="ECO:0000318"/>
    <property type="project" value="GO_Central"/>
</dbReference>
<dbReference type="GO" id="GO:0001228">
    <property type="term" value="F:DNA-binding transcription activator activity, RNA polymerase II-specific"/>
    <property type="evidence" value="ECO:0000314"/>
    <property type="project" value="NTNU_SB"/>
</dbReference>
<dbReference type="GO" id="GO:0000981">
    <property type="term" value="F:DNA-binding transcription factor activity, RNA polymerase II-specific"/>
    <property type="evidence" value="ECO:0000247"/>
    <property type="project" value="NTNU_SB"/>
</dbReference>
<dbReference type="GO" id="GO:0043565">
    <property type="term" value="F:sequence-specific DNA binding"/>
    <property type="evidence" value="ECO:0000314"/>
    <property type="project" value="NTNU_SB"/>
</dbReference>
<dbReference type="GO" id="GO:1990837">
    <property type="term" value="F:sequence-specific double-stranded DNA binding"/>
    <property type="evidence" value="ECO:0000314"/>
    <property type="project" value="ARUK-UCL"/>
</dbReference>
<dbReference type="GO" id="GO:0045944">
    <property type="term" value="P:positive regulation of transcription by RNA polymerase II"/>
    <property type="evidence" value="ECO:0000315"/>
    <property type="project" value="NTNU_SB"/>
</dbReference>
<dbReference type="GO" id="GO:0006357">
    <property type="term" value="P:regulation of transcription by RNA polymerase II"/>
    <property type="evidence" value="ECO:0000318"/>
    <property type="project" value="GO_Central"/>
</dbReference>
<dbReference type="GO" id="GO:0001501">
    <property type="term" value="P:skeletal system development"/>
    <property type="evidence" value="ECO:0000304"/>
    <property type="project" value="ProtInc"/>
</dbReference>
<dbReference type="CDD" id="cd00086">
    <property type="entry name" value="homeodomain"/>
    <property type="match status" value="1"/>
</dbReference>
<dbReference type="FunFam" id="1.10.10.60:FF:000057">
    <property type="entry name" value="Short stature homeobox 2"/>
    <property type="match status" value="1"/>
</dbReference>
<dbReference type="Gene3D" id="1.10.10.60">
    <property type="entry name" value="Homeodomain-like"/>
    <property type="match status" value="1"/>
</dbReference>
<dbReference type="InterPro" id="IPR001356">
    <property type="entry name" value="HD"/>
</dbReference>
<dbReference type="InterPro" id="IPR017970">
    <property type="entry name" value="Homeobox_CS"/>
</dbReference>
<dbReference type="InterPro" id="IPR009057">
    <property type="entry name" value="Homeodomain-like_sf"/>
</dbReference>
<dbReference type="InterPro" id="IPR000047">
    <property type="entry name" value="HTH_motif"/>
</dbReference>
<dbReference type="InterPro" id="IPR003654">
    <property type="entry name" value="OAR_dom"/>
</dbReference>
<dbReference type="InterPro" id="IPR052631">
    <property type="entry name" value="Paired_homeobox_Bicoid"/>
</dbReference>
<dbReference type="PANTHER" id="PTHR46255">
    <property type="entry name" value="SHORT STATURE HOMEOBOX"/>
    <property type="match status" value="1"/>
</dbReference>
<dbReference type="PANTHER" id="PTHR46255:SF2">
    <property type="entry name" value="SHORT STATURE HOMEOBOX PROTEIN"/>
    <property type="match status" value="1"/>
</dbReference>
<dbReference type="Pfam" id="PF00046">
    <property type="entry name" value="Homeodomain"/>
    <property type="match status" value="1"/>
</dbReference>
<dbReference type="Pfam" id="PF03826">
    <property type="entry name" value="OAR"/>
    <property type="match status" value="1"/>
</dbReference>
<dbReference type="PRINTS" id="PR00031">
    <property type="entry name" value="HTHREPRESSR"/>
</dbReference>
<dbReference type="SMART" id="SM00389">
    <property type="entry name" value="HOX"/>
    <property type="match status" value="1"/>
</dbReference>
<dbReference type="SUPFAM" id="SSF46689">
    <property type="entry name" value="Homeodomain-like"/>
    <property type="match status" value="1"/>
</dbReference>
<dbReference type="PROSITE" id="PS00027">
    <property type="entry name" value="HOMEOBOX_1"/>
    <property type="match status" value="1"/>
</dbReference>
<dbReference type="PROSITE" id="PS50071">
    <property type="entry name" value="HOMEOBOX_2"/>
    <property type="match status" value="1"/>
</dbReference>
<dbReference type="PROSITE" id="PS50803">
    <property type="entry name" value="OAR"/>
    <property type="match status" value="1"/>
</dbReference>
<gene>
    <name type="primary">SHOX</name>
    <name type="synonym">PHOG</name>
</gene>
<accession>O15266</accession>
<accession>O00412</accession>
<accession>O00413</accession>
<accession>O15267</accession>
<comment type="function">
    <text>Controls fundamental aspects of growth and development.</text>
</comment>
<comment type="interaction">
    <interactant intactId="EBI-3505698">
        <id>O15266</id>
    </interactant>
    <interactant intactId="EBI-3505701">
        <id>P35711</id>
        <label>SOX5</label>
    </interactant>
    <organismsDiffer>false</organismsDiffer>
    <experiments>2</experiments>
</comment>
<comment type="interaction">
    <interactant intactId="EBI-3505698">
        <id>O15266</id>
    </interactant>
    <interactant intactId="EBI-3505706">
        <id>P35712</id>
        <label>SOX6</label>
    </interactant>
    <organismsDiffer>false</organismsDiffer>
    <experiments>3</experiments>
</comment>
<comment type="interaction">
    <interactant intactId="EBI-12825957">
        <id>O15266-2</id>
    </interactant>
    <interactant intactId="EBI-7251368">
        <id>Q9BZE0</id>
        <label>GLIS2</label>
    </interactant>
    <organismsDiffer>false</organismsDiffer>
    <experiments>3</experiments>
</comment>
<comment type="interaction">
    <interactant intactId="EBI-12825957">
        <id>O15266-2</id>
    </interactant>
    <interactant intactId="EBI-10329202">
        <id>Q9Y5R4</id>
        <label>HEMK1</label>
    </interactant>
    <organismsDiffer>false</organismsDiffer>
    <experiments>3</experiments>
</comment>
<comment type="interaction">
    <interactant intactId="EBI-12825957">
        <id>O15266-2</id>
    </interactant>
    <interactant intactId="EBI-1055954">
        <id>P78318</id>
        <label>IGBP1</label>
    </interactant>
    <organismsDiffer>false</organismsDiffer>
    <experiments>3</experiments>
</comment>
<comment type="interaction">
    <interactant intactId="EBI-12825957">
        <id>O15266-2</id>
    </interactant>
    <interactant intactId="EBI-936601">
        <id>P52952</id>
        <label>NKX2-5</label>
    </interactant>
    <organismsDiffer>false</organismsDiffer>
    <experiments>3</experiments>
</comment>
<comment type="subcellular location">
    <subcellularLocation>
        <location evidence="2 3">Nucleus</location>
    </subcellularLocation>
</comment>
<comment type="alternative products">
    <event type="alternative splicing"/>
    <isoform>
        <id>O15266-1</id>
        <name>SHOXA</name>
        <sequence type="displayed"/>
    </isoform>
    <isoform>
        <id>O15266-2</id>
        <name>SHOXB</name>
        <sequence type="described" ref="VSP_002287"/>
    </isoform>
</comment>
<comment type="tissue specificity">
    <text>SHOXA is expressed in skeletal muscle, placenta, pancreas, heart and bone marrow fibroblast and SHOXB is highly expressed in bone marrow fibroblast followed by kidney and skeletal muscle. SHOXB is not expressed in brain, kidney, liver and lung. Highly expressed in osteogenic cells.</text>
</comment>
<comment type="induction">
    <text>By retinoic acid and phorbol-12-myristate 13-acetate (PMA).</text>
</comment>
<comment type="disease" evidence="5 6">
    <disease id="DI-01891">
        <name>Leri-Weill dyschondrosteosis</name>
        <acronym>LWD</acronym>
        <description>Dominantly inherited skeletal dysplasia characterized by moderate short stature predominantly because of short mesomelic limb segments. It is often associated with the Madelung deformity of the wrist, comprising bowing of the radius and dorsal dislocation of the distal ulna.</description>
        <dbReference type="MIM" id="127300"/>
    </disease>
    <text>The disease is caused by variants affecting the gene represented in this entry.</text>
</comment>
<comment type="disease" evidence="7">
    <disease id="DI-01876">
        <name>Langer mesomelic dysplasia</name>
        <acronym>LMD</acronym>
        <description>Autosomal recessive rare skeletal dysplasia characterized by severe short stature owing to shortening and maldevelopment of the mesomelic and rhizomelic segments of the limbs. Associated malformations are rarely reported and intellect is normal in all affected subjects reported to date.</description>
        <dbReference type="MIM" id="249700"/>
    </disease>
    <text>The disease is caused by variants affecting the gene represented in this entry.</text>
</comment>
<comment type="disease" evidence="8">
    <disease id="DI-01807">
        <name>Short stature, idiopathic, X-linked</name>
        <acronym>ISS</acronym>
        <description>A condition defined by a standing height more than 2 standard deviations below the mean (or below the 2.5 percentile) for sex and chronological age, compared with a well-nourished, genetically relevant population, in the absence of specific causative disorders.</description>
        <dbReference type="MIM" id="300582"/>
    </disease>
    <text>The disease is caused by variants affecting the gene represented in this entry.</text>
</comment>
<comment type="miscellaneous">
    <text>The gene coding for this protein is located in the pseudoautosomal region 1 (PAR1) of X and Y chromosomes.</text>
</comment>
<comment type="similarity">
    <text evidence="10">Belongs to the paired homeobox family. Bicoid subfamily.</text>
</comment>
<evidence type="ECO:0000255" key="1"/>
<evidence type="ECO:0000255" key="2">
    <source>
        <dbReference type="PROSITE-ProRule" id="PRU00108"/>
    </source>
</evidence>
<evidence type="ECO:0000255" key="3">
    <source>
        <dbReference type="PROSITE-ProRule" id="PRU00138"/>
    </source>
</evidence>
<evidence type="ECO:0000256" key="4">
    <source>
        <dbReference type="SAM" id="MobiDB-lite"/>
    </source>
</evidence>
<evidence type="ECO:0000269" key="5">
    <source>
    </source>
</evidence>
<evidence type="ECO:0000269" key="6">
    <source>
    </source>
</evidence>
<evidence type="ECO:0000269" key="7">
    <source>
    </source>
</evidence>
<evidence type="ECO:0000269" key="8">
    <source>
    </source>
</evidence>
<evidence type="ECO:0000303" key="9">
    <source>
    </source>
</evidence>
<evidence type="ECO:0000305" key="10"/>
<organism>
    <name type="scientific">Homo sapiens</name>
    <name type="common">Human</name>
    <dbReference type="NCBI Taxonomy" id="9606"/>
    <lineage>
        <taxon>Eukaryota</taxon>
        <taxon>Metazoa</taxon>
        <taxon>Chordata</taxon>
        <taxon>Craniata</taxon>
        <taxon>Vertebrata</taxon>
        <taxon>Euteleostomi</taxon>
        <taxon>Mammalia</taxon>
        <taxon>Eutheria</taxon>
        <taxon>Euarchontoglires</taxon>
        <taxon>Primates</taxon>
        <taxon>Haplorrhini</taxon>
        <taxon>Catarrhini</taxon>
        <taxon>Hominidae</taxon>
        <taxon>Homo</taxon>
    </lineage>
</organism>
<feature type="chain" id="PRO_0000049291" description="Short stature homeobox protein">
    <location>
        <begin position="1"/>
        <end position="292"/>
    </location>
</feature>
<feature type="DNA-binding region" description="Homeobox" evidence="2">
    <location>
        <begin position="117"/>
        <end position="176"/>
    </location>
</feature>
<feature type="region of interest" description="Disordered" evidence="4">
    <location>
        <begin position="1"/>
        <end position="34"/>
    </location>
</feature>
<feature type="region of interest" description="Disordered" evidence="4">
    <location>
        <begin position="100"/>
        <end position="119"/>
    </location>
</feature>
<feature type="short sequence motif" description="SH3-binding" evidence="1">
    <location>
        <begin position="242"/>
        <end position="249"/>
    </location>
</feature>
<feature type="short sequence motif" description="OAR" evidence="3">
    <location>
        <begin position="274"/>
        <end position="287"/>
    </location>
</feature>
<feature type="splice variant" id="VSP_002287" description="In isoform SHOXB." evidence="9">
    <original>VQAQLQLEGVAHAHPHLHPHLAAHAPYLMFPPPPFGLPIASLAESASAAAVVAAAAKSNSKNSSIADLRLKARKHAEALGL</original>
    <variation>MEFCSCRPGWSIMA</variation>
    <location>
        <begin position="212"/>
        <end position="292"/>
    </location>
</feature>
<feature type="sequence variant" id="VAR_019414" description="In LWD; dbSNP:rs137852554." evidence="5">
    <original>L</original>
    <variation>V</variation>
    <location>
        <position position="132"/>
    </location>
</feature>
<feature type="sequence variant" id="VAR_019415" description="In LWD; dbSNP:rs137852555." evidence="5">
    <original>R</original>
    <variation>L</variation>
    <location>
        <position position="153"/>
    </location>
</feature>
<feature type="sequence variant" id="VAR_019416" description="In LMD; dbSNP:rs137852557." evidence="7">
    <original>R</original>
    <variation>W</variation>
    <location>
        <position position="168"/>
    </location>
</feature>
<feature type="sequence variant" id="VAR_012346" description="In LWD; dbSNP:rs137852556." evidence="6">
    <original>R</original>
    <variation>C</variation>
    <location>
        <position position="173"/>
    </location>
</feature>
<sequence>MEELTAFVSKSFDQKSKDGNGGGGGGGGKKDSITYREVLESGLARSRELGTSDSSLQDITEGGGHCPVHLFKDHVDNDKEKLKEFGTARVAEGIYECKEKREDVKSEDEDGQTKLKQRRSRTNFTLEQLNELERLFDETHYPDAFMREELSQRLGLSEARVQVWFQNRRAKCRKQENQMHKGVILGTANHLDACRVAPYVNMGALRMPFQQVQAQLQLEGVAHAHPHLHPHLAAHAPYLMFPPPPFGLPIASLAESASAAAVVAAAAKSNSKNSSIADLRLKARKHAEALGL</sequence>
<protein>
    <recommendedName>
        <fullName>Short stature homeobox protein</fullName>
    </recommendedName>
    <alternativeName>
        <fullName>Pseudoautosomal homeobox-containing osteogenic protein</fullName>
    </alternativeName>
    <alternativeName>
        <fullName>Short stature homeobox-containing protein</fullName>
    </alternativeName>
</protein>